<comment type="function">
    <text evidence="2 5">Ribosome-binding protein that promotes ribosome hibernation, a process during which ribosomes are stabilized in an inactive state and preserved from proteasomal degradation (PubMed:30355441). Acts via its association with EEF2/eEF2 factor, sequestering EEF2/eEF2 at the A-site of the ribosome and promoting ribosome stabilization and storage in an inactive state (PubMed:30355441). May also play a role in the regulation of mRNA stability: binds to the 3'-most 134 nt of the SERPINE1/PAI1 mRNA, a region which confers cyclic nucleotide regulation of message decay. Seems to play a role in PML-nuclear bodies formation (By similarity).</text>
</comment>
<comment type="subunit">
    <text evidence="2 3 5">Associates with mature 80S ribosomes (PubMed:30355441). Interacts with EEF2/eEF2; interaction sequesters EEF2/eEF2 at the A-site of the ribosome, thereby blocking the interaction sites of the mRNA-tRNA complex, promoting ribosome stabilization and hibernation (PubMed:30355441). Interacts with SPIN1 (By similarity). Interacts with CHD3 and TDRD3 (By similarity). Interacts with ZDHHC17 (via ANK repeats) (By similarity).</text>
</comment>
<comment type="PTM">
    <text evidence="2">Phosphorylation by MTOR inhibits SERBP1 and relieves ribosome hibernation.</text>
</comment>
<comment type="similarity">
    <text evidence="7">Belongs to the SERBP1-HABP4 family.</text>
</comment>
<keyword id="KW-0002">3D-structure</keyword>
<keyword id="KW-0007">Acetylation</keyword>
<keyword id="KW-1017">Isopeptide bond</keyword>
<keyword id="KW-0488">Methylation</keyword>
<keyword id="KW-0597">Phosphoprotein</keyword>
<keyword id="KW-1185">Reference proteome</keyword>
<keyword id="KW-0694">RNA-binding</keyword>
<keyword id="KW-0810">Translation regulation</keyword>
<keyword id="KW-0832">Ubl conjugation</keyword>
<dbReference type="EMBL" id="AAGW02002282">
    <property type="status" value="NOT_ANNOTATED_CDS"/>
    <property type="molecule type" value="Genomic_DNA"/>
</dbReference>
<dbReference type="RefSeq" id="XP_002715983.1">
    <property type="nucleotide sequence ID" value="XM_002715937.5"/>
</dbReference>
<dbReference type="PDB" id="6MTD">
    <property type="method" value="EM"/>
    <property type="resolution" value="3.30 A"/>
    <property type="chains" value="w=183-202, w=288-299"/>
</dbReference>
<dbReference type="PDB" id="6MTE">
    <property type="method" value="EM"/>
    <property type="resolution" value="3.40 A"/>
    <property type="chains" value="w=183-202, w=209-232, w=288-299"/>
</dbReference>
<dbReference type="PDB" id="7OYD">
    <property type="method" value="EM"/>
    <property type="resolution" value="2.30 A"/>
    <property type="chains" value="w=1-407"/>
</dbReference>
<dbReference type="PDBsum" id="6MTD"/>
<dbReference type="PDBsum" id="6MTE"/>
<dbReference type="PDBsum" id="7OYD"/>
<dbReference type="EMDB" id="EMD-13114"/>
<dbReference type="SMR" id="G1SW77"/>
<dbReference type="FunCoup" id="G1SW77">
    <property type="interactions" value="2964"/>
</dbReference>
<dbReference type="STRING" id="9986.ENSOCUP00000007727"/>
<dbReference type="PaxDb" id="9986-ENSOCUP00000007727"/>
<dbReference type="Ensembl" id="ENSOCUT00000008946.3">
    <property type="protein sequence ID" value="ENSOCUP00000007727.2"/>
    <property type="gene ID" value="ENSOCUG00000008946.4"/>
</dbReference>
<dbReference type="GeneID" id="100353542"/>
<dbReference type="CTD" id="26135"/>
<dbReference type="eggNOG" id="KOG2945">
    <property type="taxonomic scope" value="Eukaryota"/>
</dbReference>
<dbReference type="GeneTree" id="ENSGT00520000055591"/>
<dbReference type="HOGENOM" id="CLU_037366_2_1_1"/>
<dbReference type="InParanoid" id="G1SW77"/>
<dbReference type="OMA" id="HNWGTIK"/>
<dbReference type="OrthoDB" id="6022699at2759"/>
<dbReference type="TreeFam" id="TF318374"/>
<dbReference type="Proteomes" id="UP000001811">
    <property type="component" value="Chromosome 13"/>
</dbReference>
<dbReference type="Bgee" id="ENSOCUG00000008946">
    <property type="expression patterns" value="Expressed in autopod skin and 16 other cell types or tissues"/>
</dbReference>
<dbReference type="ExpressionAtlas" id="G1SW77">
    <property type="expression patterns" value="baseline"/>
</dbReference>
<dbReference type="GO" id="GO:0005829">
    <property type="term" value="C:cytosol"/>
    <property type="evidence" value="ECO:0007669"/>
    <property type="project" value="Ensembl"/>
</dbReference>
<dbReference type="GO" id="GO:0005634">
    <property type="term" value="C:nucleus"/>
    <property type="evidence" value="ECO:0007669"/>
    <property type="project" value="Ensembl"/>
</dbReference>
<dbReference type="GO" id="GO:0003730">
    <property type="term" value="F:mRNA 3'-UTR binding"/>
    <property type="evidence" value="ECO:0007669"/>
    <property type="project" value="Ensembl"/>
</dbReference>
<dbReference type="GO" id="GO:0043022">
    <property type="term" value="F:ribosome binding"/>
    <property type="evidence" value="ECO:0000314"/>
    <property type="project" value="UniProtKB"/>
</dbReference>
<dbReference type="GO" id="GO:0032183">
    <property type="term" value="F:SUMO binding"/>
    <property type="evidence" value="ECO:0007669"/>
    <property type="project" value="Ensembl"/>
</dbReference>
<dbReference type="GO" id="GO:0061770">
    <property type="term" value="F:translation elongation factor binding"/>
    <property type="evidence" value="ECO:0000353"/>
    <property type="project" value="UniProtKB"/>
</dbReference>
<dbReference type="GO" id="GO:0030371">
    <property type="term" value="F:translation repressor activity"/>
    <property type="evidence" value="ECO:0000314"/>
    <property type="project" value="UniProtKB"/>
</dbReference>
<dbReference type="GO" id="GO:0017148">
    <property type="term" value="P:negative regulation of translation"/>
    <property type="evidence" value="ECO:0000314"/>
    <property type="project" value="UniProtKB"/>
</dbReference>
<dbReference type="GO" id="GO:0030578">
    <property type="term" value="P:PML body organization"/>
    <property type="evidence" value="ECO:0007669"/>
    <property type="project" value="Ensembl"/>
</dbReference>
<dbReference type="GO" id="GO:0141014">
    <property type="term" value="P:ribosome hibernation"/>
    <property type="evidence" value="ECO:0000250"/>
    <property type="project" value="UniProtKB"/>
</dbReference>
<dbReference type="InterPro" id="IPR039764">
    <property type="entry name" value="HABP4/SERBP1-like"/>
</dbReference>
<dbReference type="InterPro" id="IPR006861">
    <property type="entry name" value="HABP4_PAIRBP1-bd"/>
</dbReference>
<dbReference type="InterPro" id="IPR032381">
    <property type="entry name" value="IHABP4_N"/>
</dbReference>
<dbReference type="PANTHER" id="PTHR12299">
    <property type="entry name" value="HYALURONIC ACID-BINDING PROTEIN 4"/>
    <property type="match status" value="1"/>
</dbReference>
<dbReference type="PANTHER" id="PTHR12299:SF29">
    <property type="entry name" value="SERPINE1 MRNA-BINDING PROTEIN 1"/>
    <property type="match status" value="1"/>
</dbReference>
<dbReference type="Pfam" id="PF04774">
    <property type="entry name" value="HABP4_PAI-RBP1"/>
    <property type="match status" value="1"/>
</dbReference>
<dbReference type="Pfam" id="PF16174">
    <property type="entry name" value="IHABP4_N"/>
    <property type="match status" value="1"/>
</dbReference>
<dbReference type="SMART" id="SM01233">
    <property type="entry name" value="HABP4_PAI-RBP1"/>
    <property type="match status" value="1"/>
</dbReference>
<evidence type="ECO:0000250" key="1">
    <source>
        <dbReference type="UniProtKB" id="Q6AXS5"/>
    </source>
</evidence>
<evidence type="ECO:0000250" key="2">
    <source>
        <dbReference type="UniProtKB" id="Q8NC51"/>
    </source>
</evidence>
<evidence type="ECO:0000250" key="3">
    <source>
        <dbReference type="UniProtKB" id="Q9CY58"/>
    </source>
</evidence>
<evidence type="ECO:0000256" key="4">
    <source>
        <dbReference type="SAM" id="MobiDB-lite"/>
    </source>
</evidence>
<evidence type="ECO:0000269" key="5">
    <source>
    </source>
</evidence>
<evidence type="ECO:0000303" key="6">
    <source>
    </source>
</evidence>
<evidence type="ECO:0000305" key="7"/>
<evidence type="ECO:0007744" key="8">
    <source>
        <dbReference type="PDB" id="6MTE"/>
    </source>
</evidence>
<evidence type="ECO:0007744" key="9">
    <source>
        <dbReference type="PDB" id="7OYD"/>
    </source>
</evidence>
<evidence type="ECO:0007829" key="10">
    <source>
        <dbReference type="PDB" id="6MTD"/>
    </source>
</evidence>
<proteinExistence type="evidence at protein level"/>
<organism>
    <name type="scientific">Oryctolagus cuniculus</name>
    <name type="common">Rabbit</name>
    <dbReference type="NCBI Taxonomy" id="9986"/>
    <lineage>
        <taxon>Eukaryota</taxon>
        <taxon>Metazoa</taxon>
        <taxon>Chordata</taxon>
        <taxon>Craniata</taxon>
        <taxon>Vertebrata</taxon>
        <taxon>Euteleostomi</taxon>
        <taxon>Mammalia</taxon>
        <taxon>Eutheria</taxon>
        <taxon>Euarchontoglires</taxon>
        <taxon>Glires</taxon>
        <taxon>Lagomorpha</taxon>
        <taxon>Leporidae</taxon>
        <taxon>Oryctolagus</taxon>
    </lineage>
</organism>
<accession>G1SW77</accession>
<accession>U3KN98</accession>
<reference key="1">
    <citation type="journal article" date="2011" name="Nature">
        <title>A high-resolution map of human evolutionary constraint using 29 mammals.</title>
        <authorList>
            <person name="Lindblad-Toh K."/>
            <person name="Garber M."/>
            <person name="Zuk O."/>
            <person name="Lin M.F."/>
            <person name="Parker B.J."/>
            <person name="Washietl S."/>
            <person name="Kheradpour P."/>
            <person name="Ernst J."/>
            <person name="Jordan G."/>
            <person name="Mauceli E."/>
            <person name="Ward L.D."/>
            <person name="Lowe C.B."/>
            <person name="Holloway A.K."/>
            <person name="Clamp M."/>
            <person name="Gnerre S."/>
            <person name="Alfoldi J."/>
            <person name="Beal K."/>
            <person name="Chang J."/>
            <person name="Clawson H."/>
            <person name="Cuff J."/>
            <person name="Di Palma F."/>
            <person name="Fitzgerald S."/>
            <person name="Flicek P."/>
            <person name="Guttman M."/>
            <person name="Hubisz M.J."/>
            <person name="Jaffe D.B."/>
            <person name="Jungreis I."/>
            <person name="Kent W.J."/>
            <person name="Kostka D."/>
            <person name="Lara M."/>
            <person name="Martins A.L."/>
            <person name="Massingham T."/>
            <person name="Moltke I."/>
            <person name="Raney B.J."/>
            <person name="Rasmussen M.D."/>
            <person name="Robinson J."/>
            <person name="Stark A."/>
            <person name="Vilella A.J."/>
            <person name="Wen J."/>
            <person name="Xie X."/>
            <person name="Zody M.C."/>
            <person name="Baldwin J."/>
            <person name="Bloom T."/>
            <person name="Chin C.W."/>
            <person name="Heiman D."/>
            <person name="Nicol R."/>
            <person name="Nusbaum C."/>
            <person name="Young S."/>
            <person name="Wilkinson J."/>
            <person name="Worley K.C."/>
            <person name="Kovar C.L."/>
            <person name="Muzny D.M."/>
            <person name="Gibbs R.A."/>
            <person name="Cree A."/>
            <person name="Dihn H.H."/>
            <person name="Fowler G."/>
            <person name="Jhangiani S."/>
            <person name="Joshi V."/>
            <person name="Lee S."/>
            <person name="Lewis L.R."/>
            <person name="Nazareth L.V."/>
            <person name="Okwuonu G."/>
            <person name="Santibanez J."/>
            <person name="Warren W.C."/>
            <person name="Mardis E.R."/>
            <person name="Weinstock G.M."/>
            <person name="Wilson R.K."/>
            <person name="Delehaunty K."/>
            <person name="Dooling D."/>
            <person name="Fronik C."/>
            <person name="Fulton L."/>
            <person name="Fulton B."/>
            <person name="Graves T."/>
            <person name="Minx P."/>
            <person name="Sodergren E."/>
            <person name="Birney E."/>
            <person name="Margulies E.H."/>
            <person name="Herrero J."/>
            <person name="Green E.D."/>
            <person name="Haussler D."/>
            <person name="Siepel A."/>
            <person name="Goldman N."/>
            <person name="Pollard K.S."/>
            <person name="Pedersen J.S."/>
            <person name="Lander E.S."/>
            <person name="Kellis M."/>
        </authorList>
    </citation>
    <scope>NUCLEOTIDE SEQUENCE [LARGE SCALE GENOMIC DNA]</scope>
    <source>
        <strain>Thorbecke</strain>
    </source>
</reference>
<reference evidence="8 10" key="2">
    <citation type="journal article" date="2018" name="Elife">
        <title>Structures of translationally inactive mammalian ribosomes.</title>
        <authorList>
            <person name="Brown A."/>
            <person name="Baird M.R."/>
            <person name="Yip M.C."/>
            <person name="Murray J."/>
            <person name="Shao S."/>
        </authorList>
    </citation>
    <scope>STRUCTURE BY ELECTRON MICROSCOPY (3.30 ANGSTROMS) OF 2-857 IN COMPLEX WITH EEF2 AND RIBOSOME</scope>
    <scope>FUNCTION</scope>
    <scope>INTERACTION WITH EEF2</scope>
</reference>
<reference evidence="9" key="3">
    <citation type="journal article" date="2023" name="Nature">
        <title>A molecular network of conserved factors keeps ribosomes dormant in the egg.</title>
        <authorList>
            <person name="Leesch F."/>
            <person name="Lorenzo-Orts L."/>
            <person name="Pribitzer C."/>
            <person name="Grishkovskaya I."/>
            <person name="Roehsner J."/>
            <person name="Chugunova A."/>
            <person name="Matzinger M."/>
            <person name="Roitinger E."/>
            <person name="Belacic K."/>
            <person name="Kandolf S."/>
            <person name="Lin T.Y."/>
            <person name="Mechtler K."/>
            <person name="Meinhart A."/>
            <person name="Haselbach D."/>
            <person name="Pauli A."/>
        </authorList>
    </citation>
    <scope>STRUCTURE BY ELECTRON MICROSCOPY (2.30 ANGSTROMS) OF 183-202; 209-232 AND 289-299</scope>
</reference>
<gene>
    <name evidence="6" type="primary">SERBP1</name>
</gene>
<feature type="initiator methionine" description="Removed" evidence="2">
    <location>
        <position position="1"/>
    </location>
</feature>
<feature type="chain" id="PRO_0000458239" description="SERPINE1 mRNA-binding protein 1">
    <location>
        <begin position="2"/>
        <end position="407"/>
    </location>
</feature>
<feature type="region of interest" description="Disordered" evidence="4">
    <location>
        <begin position="33"/>
        <end position="227"/>
    </location>
</feature>
<feature type="region of interest" description="Disordered" evidence="4">
    <location>
        <begin position="242"/>
        <end position="291"/>
    </location>
</feature>
<feature type="region of interest" description="Disordered" evidence="4">
    <location>
        <begin position="327"/>
        <end position="407"/>
    </location>
</feature>
<feature type="compositionally biased region" description="Low complexity" evidence="4">
    <location>
        <begin position="51"/>
        <end position="68"/>
    </location>
</feature>
<feature type="compositionally biased region" description="Basic and acidic residues" evidence="4">
    <location>
        <begin position="70"/>
        <end position="80"/>
    </location>
</feature>
<feature type="compositionally biased region" description="Basic and acidic residues" evidence="4">
    <location>
        <begin position="89"/>
        <end position="114"/>
    </location>
</feature>
<feature type="compositionally biased region" description="Basic and acidic residues" evidence="4">
    <location>
        <begin position="122"/>
        <end position="162"/>
    </location>
</feature>
<feature type="compositionally biased region" description="Gly residues" evidence="4">
    <location>
        <begin position="164"/>
        <end position="182"/>
    </location>
</feature>
<feature type="compositionally biased region" description="Basic and acidic residues" evidence="4">
    <location>
        <begin position="183"/>
        <end position="199"/>
    </location>
</feature>
<feature type="compositionally biased region" description="Polar residues" evidence="4">
    <location>
        <begin position="242"/>
        <end position="256"/>
    </location>
</feature>
<feature type="compositionally biased region" description="Basic and acidic residues" evidence="4">
    <location>
        <begin position="261"/>
        <end position="274"/>
    </location>
</feature>
<feature type="compositionally biased region" description="Basic and acidic residues" evidence="4">
    <location>
        <begin position="281"/>
        <end position="291"/>
    </location>
</feature>
<feature type="compositionally biased region" description="Basic and acidic residues" evidence="4">
    <location>
        <begin position="327"/>
        <end position="341"/>
    </location>
</feature>
<feature type="compositionally biased region" description="Gly residues" evidence="4">
    <location>
        <begin position="362"/>
        <end position="371"/>
    </location>
</feature>
<feature type="modified residue" description="Phosphoserine" evidence="1">
    <location>
        <position position="25"/>
    </location>
</feature>
<feature type="modified residue" description="N6-acetyllysine; alternate" evidence="3">
    <location>
        <position position="52"/>
    </location>
</feature>
<feature type="modified residue" description="N6-acetyllysine" evidence="2">
    <location>
        <position position="68"/>
    </location>
</feature>
<feature type="modified residue" description="N6-acetyllysine" evidence="2">
    <location>
        <position position="122"/>
    </location>
</feature>
<feature type="modified residue" description="N6-acetyllysine" evidence="2">
    <location>
        <position position="140"/>
    </location>
</feature>
<feature type="modified residue" description="Omega-N-methylarginine" evidence="3">
    <location>
        <position position="165"/>
    </location>
</feature>
<feature type="modified residue" description="Omega-N-methylarginine" evidence="3">
    <location>
        <position position="188"/>
    </location>
</feature>
<feature type="modified residue" description="Phosphoserine" evidence="1">
    <location>
        <position position="197"/>
    </location>
</feature>
<feature type="modified residue" description="Phosphoserine" evidence="2">
    <location>
        <position position="199"/>
    </location>
</feature>
<feature type="modified residue" description="Phosphoserine" evidence="1">
    <location>
        <position position="203"/>
    </location>
</feature>
<feature type="modified residue" description="Phosphoserine" evidence="2">
    <location>
        <position position="205"/>
    </location>
</feature>
<feature type="modified residue" description="Phosphoserine" evidence="2">
    <location>
        <position position="208"/>
    </location>
</feature>
<feature type="modified residue" description="N6-acetyllysine; alternate" evidence="2">
    <location>
        <position position="211"/>
    </location>
</feature>
<feature type="modified residue" description="Omega-N-methylarginine" evidence="2">
    <location>
        <position position="216"/>
    </location>
</feature>
<feature type="modified residue" description="Phosphoserine" evidence="2">
    <location>
        <position position="221"/>
    </location>
</feature>
<feature type="modified residue" description="Phosphothreonine" evidence="2">
    <location>
        <position position="226"/>
    </location>
</feature>
<feature type="modified residue" description="Phosphoserine" evidence="1">
    <location>
        <position position="234"/>
    </location>
</feature>
<feature type="modified residue" description="N6-acetyllysine" evidence="3">
    <location>
        <position position="328"/>
    </location>
</feature>
<feature type="modified residue" description="Phosphoserine" evidence="1">
    <location>
        <position position="329"/>
    </location>
</feature>
<feature type="modified residue" description="Omega-N-methylarginine" evidence="2">
    <location>
        <position position="363"/>
    </location>
</feature>
<feature type="modified residue" description="Omega-N-methylarginine" evidence="2">
    <location>
        <position position="366"/>
    </location>
</feature>
<feature type="modified residue" description="Omega-N-methylarginine" evidence="2">
    <location>
        <position position="369"/>
    </location>
</feature>
<feature type="modified residue" description="Phosphoserine" evidence="2">
    <location>
        <position position="391"/>
    </location>
</feature>
<feature type="modified residue" description="Phosphoserine" evidence="2">
    <location>
        <position position="393"/>
    </location>
</feature>
<feature type="cross-link" description="Glycyl lysine isopeptide (Lys-Gly) (interchain with G-Cter in SUMO1); alternate" evidence="2">
    <location>
        <position position="52"/>
    </location>
</feature>
<feature type="cross-link" description="Glycyl lysine isopeptide (Lys-Gly) (interchain with G-Cter in SUMO1); alternate" evidence="2">
    <location>
        <position position="102"/>
    </location>
</feature>
<feature type="cross-link" description="Glycyl lysine isopeptide (Lys-Gly) (interchain with G-Cter in SUMO2)" evidence="2">
    <location>
        <position position="102"/>
    </location>
</feature>
<feature type="cross-link" description="Glycyl lysine isopeptide (Lys-Gly) (interchain with G-Cter in SUMO2); alternate" evidence="2">
    <location>
        <position position="102"/>
    </location>
</feature>
<feature type="cross-link" description="Glycyl lysine isopeptide (Lys-Gly) (interchain with G-Cter in SUMO2); alternate" evidence="2">
    <location>
        <position position="211"/>
    </location>
</feature>
<feature type="cross-link" description="Glycyl lysine isopeptide (Lys-Gly) (interchain with G-Cter in SUMO1); alternate" evidence="2">
    <location>
        <position position="228"/>
    </location>
</feature>
<feature type="cross-link" description="Glycyl lysine isopeptide (Lys-Gly) (interchain with G-Cter in SUMO2); alternate" evidence="2">
    <location>
        <position position="228"/>
    </location>
</feature>
<feature type="cross-link" description="Glycyl lysine isopeptide (Lys-Gly) (interchain with G-Cter in SUMO1); alternate" evidence="2">
    <location>
        <position position="280"/>
    </location>
</feature>
<feature type="cross-link" description="Glycyl lysine isopeptide (Lys-Gly) (interchain with G-Cter in SUMO2)" evidence="2">
    <location>
        <position position="280"/>
    </location>
</feature>
<feature type="cross-link" description="Glycyl lysine isopeptide (Lys-Gly) (interchain with G-Cter in SUMO2); alternate" evidence="2">
    <location>
        <position position="280"/>
    </location>
</feature>
<name>SERB1_RABIT</name>
<sequence length="407" mass="44795">MPGHLQEGFGCVVTNRFDQLFDDESDPFEVLKAAENKKKEAGGGGVGGPGAKSAAQAAAQTNSNAAGKQLRKESQKDRKNPLPPNVGVVDKKEETQPPVALKKEGIRRVGRRPDQQLQGEGKIIDRRPERRPPRERRFEKPLEEKGEGGEFSVDRPIIDRPIRGRGGLGRGRGGRGRGMGRGDGFDSRGKREFDRHSGSDRSSFSHYSGLKHEDKRGGSGSHNWGTVKDELTESPKYIQKQISYNCSDLDQSNVTEETPEGEEHPVADTENKENEVEEVKEEGPKEMTLDEWKAIQNKDRAKVEFNIRKPNEGADGQWKKGFVLHKSKSEEAHAEDSVMDHHFRKPANDITSQLEINFGDLGRPGRGGRGGRGGRGRGGRPNRGSRTDKSSASAPDVDDPEAFPALA</sequence>
<protein>
    <recommendedName>
        <fullName evidence="7">SERPINE1 mRNA-binding protein 1</fullName>
    </recommendedName>
</protein>